<name>PA2GC_RAT</name>
<sequence length="150" mass="16919">MKGIAVFLVFIFCWTTSTLSSFWQFQRMVKHITGRSAFFSYYGYGCYCGLGGRGIPVDATDRCCWAHDCCYHKLKEYGCQPILNAYQFAIVNGTVTCGCTMGGGCLCGQKACECDKLSVYCFKENLATYEKTFKQLFPTRPQCGRDKLHC</sequence>
<feature type="signal peptide" evidence="2">
    <location>
        <begin position="1"/>
        <end position="20"/>
    </location>
</feature>
<feature type="chain" id="PRO_0000022754" description="Group IIC secretory phospholipase A2">
    <location>
        <begin position="21"/>
        <end position="150"/>
    </location>
</feature>
<feature type="active site" evidence="1">
    <location>
        <position position="67"/>
    </location>
</feature>
<feature type="active site" evidence="1">
    <location>
        <position position="115"/>
    </location>
</feature>
<feature type="binding site" evidence="1">
    <location>
        <position position="47"/>
    </location>
    <ligand>
        <name>Ca(2+)</name>
        <dbReference type="ChEBI" id="CHEBI:29108"/>
    </ligand>
</feature>
<feature type="binding site" evidence="1">
    <location>
        <position position="49"/>
    </location>
    <ligand>
        <name>Ca(2+)</name>
        <dbReference type="ChEBI" id="CHEBI:29108"/>
    </ligand>
</feature>
<feature type="binding site" evidence="1">
    <location>
        <position position="51"/>
    </location>
    <ligand>
        <name>Ca(2+)</name>
        <dbReference type="ChEBI" id="CHEBI:29108"/>
    </ligand>
</feature>
<feature type="binding site" evidence="1">
    <location>
        <position position="68"/>
    </location>
    <ligand>
        <name>Ca(2+)</name>
        <dbReference type="ChEBI" id="CHEBI:29108"/>
    </ligand>
</feature>
<feature type="glycosylation site" description="N-linked (GlcNAc...) asparagine" evidence="2">
    <location>
        <position position="92"/>
    </location>
</feature>
<feature type="disulfide bond" evidence="1">
    <location>
        <begin position="46"/>
        <end position="143"/>
    </location>
</feature>
<feature type="disulfide bond" evidence="1">
    <location>
        <begin position="48"/>
        <end position="64"/>
    </location>
</feature>
<feature type="disulfide bond" evidence="1">
    <location>
        <begin position="63"/>
        <end position="121"/>
    </location>
</feature>
<feature type="disulfide bond" evidence="1">
    <location>
        <begin position="69"/>
        <end position="150"/>
    </location>
</feature>
<feature type="disulfide bond" evidence="1">
    <location>
        <begin position="70"/>
        <end position="114"/>
    </location>
</feature>
<feature type="disulfide bond" evidence="1">
    <location>
        <begin position="79"/>
        <end position="107"/>
    </location>
</feature>
<feature type="disulfide bond" evidence="1">
    <location>
        <begin position="97"/>
        <end position="112"/>
    </location>
</feature>
<feature type="disulfide bond" evidence="2">
    <location>
        <begin position="99"/>
        <end position="105"/>
    </location>
</feature>
<comment type="function">
    <text>PA2 catalyzes the calcium-dependent hydrolysis of the 2-acyl groups in 3-sn-phosphoglycerides.</text>
</comment>
<comment type="catalytic activity">
    <reaction evidence="3 4">
        <text>a 1,2-diacyl-sn-glycero-3-phosphocholine + H2O = a 1-acyl-sn-glycero-3-phosphocholine + a fatty acid + H(+)</text>
        <dbReference type="Rhea" id="RHEA:15801"/>
        <dbReference type="ChEBI" id="CHEBI:15377"/>
        <dbReference type="ChEBI" id="CHEBI:15378"/>
        <dbReference type="ChEBI" id="CHEBI:28868"/>
        <dbReference type="ChEBI" id="CHEBI:57643"/>
        <dbReference type="ChEBI" id="CHEBI:58168"/>
        <dbReference type="EC" id="3.1.1.4"/>
    </reaction>
</comment>
<comment type="cofactor">
    <cofactor evidence="1">
        <name>Ca(2+)</name>
        <dbReference type="ChEBI" id="CHEBI:29108"/>
    </cofactor>
    <text evidence="1">Binds 1 Ca(2+) ion per subunit.</text>
</comment>
<comment type="subcellular location">
    <subcellularLocation>
        <location evidence="5">Secreted</location>
    </subcellularLocation>
</comment>
<comment type="similarity">
    <text evidence="5">Belongs to the phospholipase A2 family.</text>
</comment>
<comment type="sequence caution" evidence="5">
    <conflict type="erroneous initiation">
        <sequence resource="EMBL-CDS" id="AAA57473"/>
    </conflict>
</comment>
<reference key="1">
    <citation type="journal article" date="1994" name="J. Biol. Chem.">
        <title>Cloning and characterization of novel rat and mouse low molecular weight Ca(2+)-dependent phospholipase A2s containing 16 cysteines.</title>
        <authorList>
            <person name="Chen J."/>
            <person name="Engle S.J."/>
            <person name="Seilhamer J.J."/>
            <person name="Tischfield J.A."/>
        </authorList>
    </citation>
    <scope>NUCLEOTIDE SEQUENCE [MRNA]</scope>
    <source>
        <tissue>Brain</tissue>
    </source>
</reference>
<dbReference type="EC" id="3.1.1.4"/>
<dbReference type="EMBL" id="U07798">
    <property type="protein sequence ID" value="AAA57473.1"/>
    <property type="status" value="ALT_INIT"/>
    <property type="molecule type" value="mRNA"/>
</dbReference>
<dbReference type="PIR" id="B54762">
    <property type="entry name" value="B54762"/>
</dbReference>
<dbReference type="RefSeq" id="NP_062075.1">
    <property type="nucleotide sequence ID" value="NM_019202.2"/>
</dbReference>
<dbReference type="RefSeq" id="XP_006239204.1">
    <property type="nucleotide sequence ID" value="XM_006239142.3"/>
</dbReference>
<dbReference type="RefSeq" id="XP_006239205.1">
    <property type="nucleotide sequence ID" value="XM_006239143.3"/>
</dbReference>
<dbReference type="RefSeq" id="XP_008762435.1">
    <property type="nucleotide sequence ID" value="XM_008764213.2"/>
</dbReference>
<dbReference type="SMR" id="P39878"/>
<dbReference type="FunCoup" id="P39878">
    <property type="interactions" value="228"/>
</dbReference>
<dbReference type="STRING" id="10116.ENSRNOP00000072615"/>
<dbReference type="GlyCosmos" id="P39878">
    <property type="glycosylation" value="1 site, No reported glycans"/>
</dbReference>
<dbReference type="GlyGen" id="P39878">
    <property type="glycosylation" value="1 site"/>
</dbReference>
<dbReference type="PaxDb" id="10116-ENSRNOP00000039825"/>
<dbReference type="GeneID" id="29387"/>
<dbReference type="KEGG" id="rno:29387"/>
<dbReference type="UCSC" id="RGD:3340">
    <property type="organism name" value="rat"/>
</dbReference>
<dbReference type="AGR" id="RGD:3340"/>
<dbReference type="CTD" id="391013"/>
<dbReference type="RGD" id="3340">
    <property type="gene designation" value="Pla2g2c"/>
</dbReference>
<dbReference type="eggNOG" id="KOG4087">
    <property type="taxonomic scope" value="Eukaryota"/>
</dbReference>
<dbReference type="InParanoid" id="P39878"/>
<dbReference type="OrthoDB" id="5841574at2759"/>
<dbReference type="PRO" id="PR:P39878"/>
<dbReference type="Proteomes" id="UP000002494">
    <property type="component" value="Unplaced"/>
</dbReference>
<dbReference type="GO" id="GO:0005576">
    <property type="term" value="C:extracellular region"/>
    <property type="evidence" value="ECO:0007669"/>
    <property type="project" value="UniProtKB-SubCell"/>
</dbReference>
<dbReference type="GO" id="GO:0005509">
    <property type="term" value="F:calcium ion binding"/>
    <property type="evidence" value="ECO:0000318"/>
    <property type="project" value="GO_Central"/>
</dbReference>
<dbReference type="GO" id="GO:0047498">
    <property type="term" value="F:calcium-dependent phospholipase A2 activity"/>
    <property type="evidence" value="ECO:0000314"/>
    <property type="project" value="RGD"/>
</dbReference>
<dbReference type="GO" id="GO:0005543">
    <property type="term" value="F:phospholipid binding"/>
    <property type="evidence" value="ECO:0000318"/>
    <property type="project" value="GO_Central"/>
</dbReference>
<dbReference type="GO" id="GO:0005102">
    <property type="term" value="F:signaling receptor binding"/>
    <property type="evidence" value="ECO:0000318"/>
    <property type="project" value="GO_Central"/>
</dbReference>
<dbReference type="GO" id="GO:0050482">
    <property type="term" value="P:arachidonate secretion"/>
    <property type="evidence" value="ECO:0007669"/>
    <property type="project" value="InterPro"/>
</dbReference>
<dbReference type="GO" id="GO:0016042">
    <property type="term" value="P:lipid catabolic process"/>
    <property type="evidence" value="ECO:0007669"/>
    <property type="project" value="UniProtKB-KW"/>
</dbReference>
<dbReference type="GO" id="GO:0046470">
    <property type="term" value="P:phosphatidylcholine metabolic process"/>
    <property type="evidence" value="ECO:0000318"/>
    <property type="project" value="GO_Central"/>
</dbReference>
<dbReference type="GO" id="GO:0046471">
    <property type="term" value="P:phosphatidylglycerol metabolic process"/>
    <property type="evidence" value="ECO:0000318"/>
    <property type="project" value="GO_Central"/>
</dbReference>
<dbReference type="FunFam" id="1.20.90.10:FF:000008">
    <property type="entry name" value="Phospholipase A(2)"/>
    <property type="match status" value="1"/>
</dbReference>
<dbReference type="Gene3D" id="1.20.90.10">
    <property type="entry name" value="Phospholipase A2 domain"/>
    <property type="match status" value="1"/>
</dbReference>
<dbReference type="InterPro" id="IPR001211">
    <property type="entry name" value="PLipase_A2"/>
</dbReference>
<dbReference type="InterPro" id="IPR033112">
    <property type="entry name" value="PLipase_A2_Asp_AS"/>
</dbReference>
<dbReference type="InterPro" id="IPR016090">
    <property type="entry name" value="PLipase_A2_dom"/>
</dbReference>
<dbReference type="InterPro" id="IPR036444">
    <property type="entry name" value="PLipase_A2_dom_sf"/>
</dbReference>
<dbReference type="InterPro" id="IPR033113">
    <property type="entry name" value="PLipase_A2_His_AS"/>
</dbReference>
<dbReference type="PANTHER" id="PTHR11716:SF5">
    <property type="entry name" value="INACTIVE GROUP IIC SECRETORY PHOSPHOLIPASE A2-RELATED"/>
    <property type="match status" value="1"/>
</dbReference>
<dbReference type="PANTHER" id="PTHR11716">
    <property type="entry name" value="PHOSPHOLIPASE A2 FAMILY MEMBER"/>
    <property type="match status" value="1"/>
</dbReference>
<dbReference type="Pfam" id="PF00068">
    <property type="entry name" value="Phospholip_A2_1"/>
    <property type="match status" value="1"/>
</dbReference>
<dbReference type="PRINTS" id="PR00389">
    <property type="entry name" value="PHPHLIPASEA2"/>
</dbReference>
<dbReference type="SMART" id="SM00085">
    <property type="entry name" value="PA2c"/>
    <property type="match status" value="1"/>
</dbReference>
<dbReference type="SUPFAM" id="SSF48619">
    <property type="entry name" value="Phospholipase A2, PLA2"/>
    <property type="match status" value="1"/>
</dbReference>
<dbReference type="PROSITE" id="PS00119">
    <property type="entry name" value="PA2_ASP"/>
    <property type="match status" value="1"/>
</dbReference>
<dbReference type="PROSITE" id="PS00118">
    <property type="entry name" value="PA2_HIS"/>
    <property type="match status" value="1"/>
</dbReference>
<evidence type="ECO:0000250" key="1"/>
<evidence type="ECO:0000255" key="2"/>
<evidence type="ECO:0000255" key="3">
    <source>
        <dbReference type="PROSITE-ProRule" id="PRU10035"/>
    </source>
</evidence>
<evidence type="ECO:0000255" key="4">
    <source>
        <dbReference type="PROSITE-ProRule" id="PRU10036"/>
    </source>
</evidence>
<evidence type="ECO:0000305" key="5"/>
<organism>
    <name type="scientific">Rattus norvegicus</name>
    <name type="common">Rat</name>
    <dbReference type="NCBI Taxonomy" id="10116"/>
    <lineage>
        <taxon>Eukaryota</taxon>
        <taxon>Metazoa</taxon>
        <taxon>Chordata</taxon>
        <taxon>Craniata</taxon>
        <taxon>Vertebrata</taxon>
        <taxon>Euteleostomi</taxon>
        <taxon>Mammalia</taxon>
        <taxon>Eutheria</taxon>
        <taxon>Euarchontoglires</taxon>
        <taxon>Glires</taxon>
        <taxon>Rodentia</taxon>
        <taxon>Myomorpha</taxon>
        <taxon>Muroidea</taxon>
        <taxon>Muridae</taxon>
        <taxon>Murinae</taxon>
        <taxon>Rattus</taxon>
    </lineage>
</organism>
<keyword id="KW-0106">Calcium</keyword>
<keyword id="KW-1015">Disulfide bond</keyword>
<keyword id="KW-0325">Glycoprotein</keyword>
<keyword id="KW-0378">Hydrolase</keyword>
<keyword id="KW-0442">Lipid degradation</keyword>
<keyword id="KW-0443">Lipid metabolism</keyword>
<keyword id="KW-0479">Metal-binding</keyword>
<keyword id="KW-1185">Reference proteome</keyword>
<keyword id="KW-0964">Secreted</keyword>
<keyword id="KW-0732">Signal</keyword>
<protein>
    <recommendedName>
        <fullName>Group IIC secretory phospholipase A2</fullName>
        <shortName>GIIC sPLA2</shortName>
        <shortName>sPLA2-IIC</shortName>
        <ecNumber>3.1.1.4</ecNumber>
    </recommendedName>
    <alternativeName>
        <fullName>14 kDa phospholipase A2</fullName>
    </alternativeName>
    <alternativeName>
        <fullName>PLA2-8</fullName>
    </alternativeName>
    <alternativeName>
        <fullName>Phosphatidylcholine 2-acylhydrolase 2C</fullName>
    </alternativeName>
</protein>
<gene>
    <name type="primary">Pla2g2c</name>
</gene>
<accession>P39878</accession>
<proteinExistence type="evidence at transcript level"/>